<keyword id="KW-0687">Ribonucleoprotein</keyword>
<keyword id="KW-0689">Ribosomal protein</keyword>
<keyword id="KW-0694">RNA-binding</keyword>
<keyword id="KW-0699">rRNA-binding</keyword>
<feature type="chain" id="PRO_1000166318" description="Large ribosomal subunit protein uL15">
    <location>
        <begin position="1"/>
        <end position="146"/>
    </location>
</feature>
<feature type="region of interest" description="Disordered" evidence="2">
    <location>
        <begin position="1"/>
        <end position="51"/>
    </location>
</feature>
<feature type="compositionally biased region" description="Basic and acidic residues" evidence="2">
    <location>
        <begin position="1"/>
        <end position="13"/>
    </location>
</feature>
<feature type="compositionally biased region" description="Gly residues" evidence="2">
    <location>
        <begin position="23"/>
        <end position="35"/>
    </location>
</feature>
<feature type="compositionally biased region" description="Gly residues" evidence="2">
    <location>
        <begin position="42"/>
        <end position="51"/>
    </location>
</feature>
<comment type="function">
    <text evidence="1">Binds to the 23S rRNA.</text>
</comment>
<comment type="subunit">
    <text evidence="1">Part of the 50S ribosomal subunit.</text>
</comment>
<comment type="similarity">
    <text evidence="1">Belongs to the universal ribosomal protein uL15 family.</text>
</comment>
<reference key="1">
    <citation type="journal article" date="2010" name="Genome Biol.">
        <title>Structure and dynamics of the pan-genome of Streptococcus pneumoniae and closely related species.</title>
        <authorList>
            <person name="Donati C."/>
            <person name="Hiller N.L."/>
            <person name="Tettelin H."/>
            <person name="Muzzi A."/>
            <person name="Croucher N.J."/>
            <person name="Angiuoli S.V."/>
            <person name="Oggioni M."/>
            <person name="Dunning Hotopp J.C."/>
            <person name="Hu F.Z."/>
            <person name="Riley D.R."/>
            <person name="Covacci A."/>
            <person name="Mitchell T.J."/>
            <person name="Bentley S.D."/>
            <person name="Kilian M."/>
            <person name="Ehrlich G.D."/>
            <person name="Rappuoli R."/>
            <person name="Moxon E.R."/>
            <person name="Masignani V."/>
        </authorList>
    </citation>
    <scope>NUCLEOTIDE SEQUENCE [LARGE SCALE GENOMIC DNA]</scope>
    <source>
        <strain>JJA</strain>
    </source>
</reference>
<accession>C1CC25</accession>
<dbReference type="EMBL" id="CP000919">
    <property type="protein sequence ID" value="ACO20130.1"/>
    <property type="molecule type" value="Genomic_DNA"/>
</dbReference>
<dbReference type="RefSeq" id="WP_000766087.1">
    <property type="nucleotide sequence ID" value="NC_012466.1"/>
</dbReference>
<dbReference type="SMR" id="C1CC25"/>
<dbReference type="GeneID" id="45652290"/>
<dbReference type="KEGG" id="sjj:SPJ_0238"/>
<dbReference type="HOGENOM" id="CLU_055188_4_2_9"/>
<dbReference type="Proteomes" id="UP000002206">
    <property type="component" value="Chromosome"/>
</dbReference>
<dbReference type="GO" id="GO:0022625">
    <property type="term" value="C:cytosolic large ribosomal subunit"/>
    <property type="evidence" value="ECO:0007669"/>
    <property type="project" value="TreeGrafter"/>
</dbReference>
<dbReference type="GO" id="GO:0019843">
    <property type="term" value="F:rRNA binding"/>
    <property type="evidence" value="ECO:0007669"/>
    <property type="project" value="UniProtKB-UniRule"/>
</dbReference>
<dbReference type="GO" id="GO:0003735">
    <property type="term" value="F:structural constituent of ribosome"/>
    <property type="evidence" value="ECO:0007669"/>
    <property type="project" value="InterPro"/>
</dbReference>
<dbReference type="GO" id="GO:0006412">
    <property type="term" value="P:translation"/>
    <property type="evidence" value="ECO:0007669"/>
    <property type="project" value="UniProtKB-UniRule"/>
</dbReference>
<dbReference type="FunFam" id="3.100.10.10:FF:000004">
    <property type="entry name" value="50S ribosomal protein L15"/>
    <property type="match status" value="1"/>
</dbReference>
<dbReference type="Gene3D" id="3.100.10.10">
    <property type="match status" value="1"/>
</dbReference>
<dbReference type="HAMAP" id="MF_01341">
    <property type="entry name" value="Ribosomal_uL15"/>
    <property type="match status" value="1"/>
</dbReference>
<dbReference type="InterPro" id="IPR030878">
    <property type="entry name" value="Ribosomal_uL15"/>
</dbReference>
<dbReference type="InterPro" id="IPR021131">
    <property type="entry name" value="Ribosomal_uL15/eL18"/>
</dbReference>
<dbReference type="InterPro" id="IPR036227">
    <property type="entry name" value="Ribosomal_uL15/eL18_sf"/>
</dbReference>
<dbReference type="InterPro" id="IPR005749">
    <property type="entry name" value="Ribosomal_uL15_bac-type"/>
</dbReference>
<dbReference type="InterPro" id="IPR001196">
    <property type="entry name" value="Ribosomal_uL15_CS"/>
</dbReference>
<dbReference type="NCBIfam" id="TIGR01071">
    <property type="entry name" value="rplO_bact"/>
    <property type="match status" value="1"/>
</dbReference>
<dbReference type="PANTHER" id="PTHR12934">
    <property type="entry name" value="50S RIBOSOMAL PROTEIN L15"/>
    <property type="match status" value="1"/>
</dbReference>
<dbReference type="PANTHER" id="PTHR12934:SF11">
    <property type="entry name" value="LARGE RIBOSOMAL SUBUNIT PROTEIN UL15M"/>
    <property type="match status" value="1"/>
</dbReference>
<dbReference type="Pfam" id="PF00828">
    <property type="entry name" value="Ribosomal_L27A"/>
    <property type="match status" value="1"/>
</dbReference>
<dbReference type="SUPFAM" id="SSF52080">
    <property type="entry name" value="Ribosomal proteins L15p and L18e"/>
    <property type="match status" value="1"/>
</dbReference>
<dbReference type="PROSITE" id="PS00475">
    <property type="entry name" value="RIBOSOMAL_L15"/>
    <property type="match status" value="1"/>
</dbReference>
<protein>
    <recommendedName>
        <fullName evidence="1">Large ribosomal subunit protein uL15</fullName>
    </recommendedName>
    <alternativeName>
        <fullName evidence="3">50S ribosomal protein L15</fullName>
    </alternativeName>
</protein>
<sequence length="146" mass="15446">MKLHELKPAEGSRKVRNRVGRGTSSGNGKTSGRGQKGQKARSGGGVRLGFEGGQTPLFRRLPKRGFTNINAKEYAIVNLDQLNVFEDGAEVTPVVLIEAGIVKAEKSGIKILGNGELTKKLTVKAAKFSKSAEEAITAKGGSVEVI</sequence>
<proteinExistence type="inferred from homology"/>
<gene>
    <name evidence="1" type="primary">rplO</name>
    <name type="ordered locus">SPJ_0238</name>
</gene>
<organism>
    <name type="scientific">Streptococcus pneumoniae (strain JJA)</name>
    <dbReference type="NCBI Taxonomy" id="488222"/>
    <lineage>
        <taxon>Bacteria</taxon>
        <taxon>Bacillati</taxon>
        <taxon>Bacillota</taxon>
        <taxon>Bacilli</taxon>
        <taxon>Lactobacillales</taxon>
        <taxon>Streptococcaceae</taxon>
        <taxon>Streptococcus</taxon>
    </lineage>
</organism>
<evidence type="ECO:0000255" key="1">
    <source>
        <dbReference type="HAMAP-Rule" id="MF_01341"/>
    </source>
</evidence>
<evidence type="ECO:0000256" key="2">
    <source>
        <dbReference type="SAM" id="MobiDB-lite"/>
    </source>
</evidence>
<evidence type="ECO:0000305" key="3"/>
<name>RL15_STRZJ</name>